<proteinExistence type="inferred from homology"/>
<comment type="function">
    <text evidence="1">Specifically methylates the cytosine at position 1962 (m5C1962) of 23S rRNA.</text>
</comment>
<comment type="catalytic activity">
    <reaction evidence="1">
        <text>cytidine(1962) in 23S rRNA + S-adenosyl-L-methionine = 5-methylcytidine(1962) in 23S rRNA + S-adenosyl-L-homocysteine + H(+)</text>
        <dbReference type="Rhea" id="RHEA:42912"/>
        <dbReference type="Rhea" id="RHEA-COMP:10382"/>
        <dbReference type="Rhea" id="RHEA-COMP:10386"/>
        <dbReference type="ChEBI" id="CHEBI:15378"/>
        <dbReference type="ChEBI" id="CHEBI:57856"/>
        <dbReference type="ChEBI" id="CHEBI:59789"/>
        <dbReference type="ChEBI" id="CHEBI:74483"/>
        <dbReference type="ChEBI" id="CHEBI:82748"/>
        <dbReference type="EC" id="2.1.1.191"/>
    </reaction>
</comment>
<comment type="subcellular location">
    <subcellularLocation>
        <location evidence="1">Cytoplasm</location>
    </subcellularLocation>
</comment>
<comment type="similarity">
    <text evidence="1">Belongs to the methyltransferase superfamily. RlmI family.</text>
</comment>
<dbReference type="EC" id="2.1.1.191" evidence="1"/>
<dbReference type="EMBL" id="CP000563">
    <property type="protein sequence ID" value="ABN62774.1"/>
    <property type="molecule type" value="Genomic_DNA"/>
</dbReference>
<dbReference type="RefSeq" id="WP_006083894.1">
    <property type="nucleotide sequence ID" value="NC_009052.1"/>
</dbReference>
<dbReference type="SMR" id="A3D7R1"/>
<dbReference type="GeneID" id="11773557"/>
<dbReference type="KEGG" id="sbl:Sbal_3294"/>
<dbReference type="HOGENOM" id="CLU_014042_0_0_6"/>
<dbReference type="OrthoDB" id="9805492at2"/>
<dbReference type="Proteomes" id="UP000001557">
    <property type="component" value="Chromosome"/>
</dbReference>
<dbReference type="GO" id="GO:0005737">
    <property type="term" value="C:cytoplasm"/>
    <property type="evidence" value="ECO:0007669"/>
    <property type="project" value="UniProtKB-SubCell"/>
</dbReference>
<dbReference type="GO" id="GO:0003723">
    <property type="term" value="F:RNA binding"/>
    <property type="evidence" value="ECO:0007669"/>
    <property type="project" value="UniProtKB-KW"/>
</dbReference>
<dbReference type="GO" id="GO:0016434">
    <property type="term" value="F:rRNA (cytosine) methyltransferase activity"/>
    <property type="evidence" value="ECO:0007669"/>
    <property type="project" value="UniProtKB-UniRule"/>
</dbReference>
<dbReference type="CDD" id="cd02440">
    <property type="entry name" value="AdoMet_MTases"/>
    <property type="match status" value="1"/>
</dbReference>
<dbReference type="CDD" id="cd21153">
    <property type="entry name" value="PUA_RlmI"/>
    <property type="match status" value="1"/>
</dbReference>
<dbReference type="CDD" id="cd11572">
    <property type="entry name" value="RlmI_M_like"/>
    <property type="match status" value="1"/>
</dbReference>
<dbReference type="Gene3D" id="2.30.130.10">
    <property type="entry name" value="PUA domain"/>
    <property type="match status" value="1"/>
</dbReference>
<dbReference type="Gene3D" id="3.30.750.80">
    <property type="entry name" value="RNA methyltransferase domain (HRMD) like"/>
    <property type="match status" value="1"/>
</dbReference>
<dbReference type="Gene3D" id="3.40.50.150">
    <property type="entry name" value="Vaccinia Virus protein VP39"/>
    <property type="match status" value="1"/>
</dbReference>
<dbReference type="HAMAP" id="MF_01857">
    <property type="entry name" value="23SrRNA_methyltr_I"/>
    <property type="match status" value="1"/>
</dbReference>
<dbReference type="InterPro" id="IPR002478">
    <property type="entry name" value="PUA"/>
</dbReference>
<dbReference type="InterPro" id="IPR015947">
    <property type="entry name" value="PUA-like_sf"/>
</dbReference>
<dbReference type="InterPro" id="IPR036974">
    <property type="entry name" value="PUA_sf"/>
</dbReference>
<dbReference type="InterPro" id="IPR023542">
    <property type="entry name" value="RLMI"/>
</dbReference>
<dbReference type="InterPro" id="IPR041532">
    <property type="entry name" value="RlmI-like_PUA"/>
</dbReference>
<dbReference type="InterPro" id="IPR019614">
    <property type="entry name" value="SAM-dep_methyl-trfase"/>
</dbReference>
<dbReference type="InterPro" id="IPR029063">
    <property type="entry name" value="SAM-dependent_MTases_sf"/>
</dbReference>
<dbReference type="PANTHER" id="PTHR42873">
    <property type="entry name" value="RIBOSOMAL RNA LARGE SUBUNIT METHYLTRANSFERASE"/>
    <property type="match status" value="1"/>
</dbReference>
<dbReference type="PANTHER" id="PTHR42873:SF1">
    <property type="entry name" value="S-ADENOSYLMETHIONINE-DEPENDENT METHYLTRANSFERASE DOMAIN-CONTAINING PROTEIN"/>
    <property type="match status" value="1"/>
</dbReference>
<dbReference type="Pfam" id="PF10672">
    <property type="entry name" value="Methyltrans_SAM"/>
    <property type="match status" value="1"/>
</dbReference>
<dbReference type="Pfam" id="PF17785">
    <property type="entry name" value="PUA_3"/>
    <property type="match status" value="1"/>
</dbReference>
<dbReference type="SMART" id="SM00359">
    <property type="entry name" value="PUA"/>
    <property type="match status" value="1"/>
</dbReference>
<dbReference type="SUPFAM" id="SSF88697">
    <property type="entry name" value="PUA domain-like"/>
    <property type="match status" value="1"/>
</dbReference>
<dbReference type="SUPFAM" id="SSF53335">
    <property type="entry name" value="S-adenosyl-L-methionine-dependent methyltransferases"/>
    <property type="match status" value="1"/>
</dbReference>
<dbReference type="PROSITE" id="PS50890">
    <property type="entry name" value="PUA"/>
    <property type="match status" value="1"/>
</dbReference>
<organism>
    <name type="scientific">Shewanella baltica (strain OS155 / ATCC BAA-1091)</name>
    <dbReference type="NCBI Taxonomy" id="325240"/>
    <lineage>
        <taxon>Bacteria</taxon>
        <taxon>Pseudomonadati</taxon>
        <taxon>Pseudomonadota</taxon>
        <taxon>Gammaproteobacteria</taxon>
        <taxon>Alteromonadales</taxon>
        <taxon>Shewanellaceae</taxon>
        <taxon>Shewanella</taxon>
    </lineage>
</organism>
<accession>A3D7R1</accession>
<gene>
    <name evidence="1" type="primary">rlmI</name>
    <name type="ordered locus">Sbal_3294</name>
</gene>
<reference key="1">
    <citation type="submission" date="2007-02" db="EMBL/GenBank/DDBJ databases">
        <title>Complete sequence of chromosome of Shewanella baltica OS155.</title>
        <authorList>
            <consortium name="US DOE Joint Genome Institute"/>
            <person name="Copeland A."/>
            <person name="Lucas S."/>
            <person name="Lapidus A."/>
            <person name="Barry K."/>
            <person name="Detter J.C."/>
            <person name="Glavina del Rio T."/>
            <person name="Hammon N."/>
            <person name="Israni S."/>
            <person name="Dalin E."/>
            <person name="Tice H."/>
            <person name="Pitluck S."/>
            <person name="Sims D.R."/>
            <person name="Brettin T."/>
            <person name="Bruce D."/>
            <person name="Han C."/>
            <person name="Tapia R."/>
            <person name="Brainard J."/>
            <person name="Schmutz J."/>
            <person name="Larimer F."/>
            <person name="Land M."/>
            <person name="Hauser L."/>
            <person name="Kyrpides N."/>
            <person name="Mikhailova N."/>
            <person name="Brettar I."/>
            <person name="Klappenbach J."/>
            <person name="Konstantinidis K."/>
            <person name="Rodrigues J."/>
            <person name="Tiedje J."/>
            <person name="Richardson P."/>
        </authorList>
    </citation>
    <scope>NUCLEOTIDE SEQUENCE [LARGE SCALE GENOMIC DNA]</scope>
    <source>
        <strain>OS155 / ATCC BAA-1091</strain>
    </source>
</reference>
<feature type="chain" id="PRO_0000366255" description="Ribosomal RNA large subunit methyltransferase I">
    <location>
        <begin position="1"/>
        <end position="396"/>
    </location>
</feature>
<feature type="domain" description="PUA" evidence="1">
    <location>
        <begin position="2"/>
        <end position="79"/>
    </location>
</feature>
<keyword id="KW-0963">Cytoplasm</keyword>
<keyword id="KW-0489">Methyltransferase</keyword>
<keyword id="KW-1185">Reference proteome</keyword>
<keyword id="KW-0694">RNA-binding</keyword>
<keyword id="KW-0698">rRNA processing</keyword>
<keyword id="KW-0949">S-adenosyl-L-methionine</keyword>
<keyword id="KW-0808">Transferase</keyword>
<evidence type="ECO:0000255" key="1">
    <source>
        <dbReference type="HAMAP-Rule" id="MF_01857"/>
    </source>
</evidence>
<sequence length="396" mass="44143">MAIRIKLKPGREKSLERRHPWVFSNAIHNIKGKPEAGETVDVVAHDGHWLGRGAWSPESQIQVRIWTFDREEEIDREFFARRLQRAQIGRNDLIREQGLTGYRLVAAESDGLPGITIDRYANVLVCQLLSTGADLWRDTLVELLAEQYPDCAIYERSDVDSRKKEGLLPVTGLLHGTLPEMPVIIEENGIKIAVDVIKGHKTGFYLDQRDNRAIAARFVKDKSVLNCFCYTGTFGLYAAKAGAASIENVDVSSLALATARLNMQVNGLSDDNVHYNEADVFKLLRLYRDEGKTFDVIVLDPPKFADNKAQLNGACRGYKDINMIALQLLNPGGVLLTFSCSGLMPADLFQKIVADAALDAKREIQFIERLSQASDHPIGSAFPEGFYLKGLVARAW</sequence>
<protein>
    <recommendedName>
        <fullName evidence="1">Ribosomal RNA large subunit methyltransferase I</fullName>
        <ecNumber evidence="1">2.1.1.191</ecNumber>
    </recommendedName>
    <alternativeName>
        <fullName evidence="1">23S rRNA m5C1962 methyltransferase</fullName>
    </alternativeName>
    <alternativeName>
        <fullName evidence="1">rRNA (cytosine-C(5)-)-methyltransferase RlmI</fullName>
    </alternativeName>
</protein>
<name>RLMI_SHEB5</name>